<proteinExistence type="inferred from homology"/>
<comment type="catalytic activity">
    <reaction evidence="5">
        <text>S-ubiquitinyl-[E2 ubiquitin-conjugating enzyme]-L-cysteine + [acceptor protein]-L-lysine = [E2 ubiquitin-conjugating enzyme]-L-cysteine + N(6)-ubiquitinyl-[acceptor protein]-L-lysine.</text>
        <dbReference type="EC" id="2.3.2.27"/>
    </reaction>
</comment>
<comment type="pathway">
    <text>Protein modification; protein ubiquitination.</text>
</comment>
<comment type="subcellular location">
    <subcellularLocation>
        <location evidence="5">Membrane</location>
        <topology evidence="5">Single-pass membrane protein</topology>
    </subcellularLocation>
</comment>
<comment type="domain">
    <text evidence="1">The RING-type zinc finger domain mediates binding to an E2 ubiquitin-conjugating enzyme.</text>
</comment>
<comment type="similarity">
    <text evidence="5">Belongs to the RING-type zinc finger family. ATL subfamily.</text>
</comment>
<organism>
    <name type="scientific">Arabidopsis thaliana</name>
    <name type="common">Mouse-ear cress</name>
    <dbReference type="NCBI Taxonomy" id="3702"/>
    <lineage>
        <taxon>Eukaryota</taxon>
        <taxon>Viridiplantae</taxon>
        <taxon>Streptophyta</taxon>
        <taxon>Embryophyta</taxon>
        <taxon>Tracheophyta</taxon>
        <taxon>Spermatophyta</taxon>
        <taxon>Magnoliopsida</taxon>
        <taxon>eudicotyledons</taxon>
        <taxon>Gunneridae</taxon>
        <taxon>Pentapetalae</taxon>
        <taxon>rosids</taxon>
        <taxon>malvids</taxon>
        <taxon>Brassicales</taxon>
        <taxon>Brassicaceae</taxon>
        <taxon>Camelineae</taxon>
        <taxon>Arabidopsis</taxon>
    </lineage>
</organism>
<accession>Q9FHG8</accession>
<evidence type="ECO:0000250" key="1"/>
<evidence type="ECO:0000255" key="2"/>
<evidence type="ECO:0000255" key="3">
    <source>
        <dbReference type="PROSITE-ProRule" id="PRU00175"/>
    </source>
</evidence>
<evidence type="ECO:0000256" key="4">
    <source>
        <dbReference type="SAM" id="MobiDB-lite"/>
    </source>
</evidence>
<evidence type="ECO:0000305" key="5"/>
<feature type="chain" id="PRO_0000055816" description="Putative RING-H2 finger protein ATL50">
    <location>
        <begin position="1"/>
        <end position="210"/>
    </location>
</feature>
<feature type="transmembrane region" description="Helical" evidence="2">
    <location>
        <begin position="35"/>
        <end position="55"/>
    </location>
</feature>
<feature type="zinc finger region" description="RING-type; atypical" evidence="3">
    <location>
        <begin position="122"/>
        <end position="164"/>
    </location>
</feature>
<feature type="region of interest" description="Disordered" evidence="4">
    <location>
        <begin position="187"/>
        <end position="210"/>
    </location>
</feature>
<sequence>MDQKSDSFLSVSSISFSYSSSTDKDFDLICMISPIVLLYITLLSIIFFVAALIHLLVKFLHRPQTRLDDAYDGITESSTALQGRYQTRFNLHDAEIDQSFIDALPLLHYKTMIGLRHDLSDCAVCLREFTAEDELRLLPKCSHAFHVECIDTWLLTNSTCPLCRDNLLLLGLTGTASSSTIVLVHESDGDNSQDSDSSFMLTDLDDVESK</sequence>
<reference key="1">
    <citation type="journal article" date="1999" name="DNA Res.">
        <title>Structural analysis of Arabidopsis thaliana chromosome 5. IX. Sequence features of the regions of 1,011,550 bp covered by seventeen P1 and TAC clones.</title>
        <authorList>
            <person name="Kaneko T."/>
            <person name="Katoh T."/>
            <person name="Sato S."/>
            <person name="Nakamura Y."/>
            <person name="Asamizu E."/>
            <person name="Kotani H."/>
            <person name="Miyajima N."/>
            <person name="Tabata S."/>
        </authorList>
    </citation>
    <scope>NUCLEOTIDE SEQUENCE [LARGE SCALE GENOMIC DNA]</scope>
    <source>
        <strain>cv. Columbia</strain>
    </source>
</reference>
<reference key="2">
    <citation type="journal article" date="2017" name="Plant J.">
        <title>Araport11: a complete reannotation of the Arabidopsis thaliana reference genome.</title>
        <authorList>
            <person name="Cheng C.Y."/>
            <person name="Krishnakumar V."/>
            <person name="Chan A.P."/>
            <person name="Thibaud-Nissen F."/>
            <person name="Schobel S."/>
            <person name="Town C.D."/>
        </authorList>
    </citation>
    <scope>GENOME REANNOTATION</scope>
    <source>
        <strain>cv. Columbia</strain>
    </source>
</reference>
<reference key="3">
    <citation type="journal article" date="2002" name="Genome Biol.">
        <title>Evaluation and classification of RING-finger domains encoded by the Arabidopsis genome.</title>
        <authorList>
            <person name="Kosarev P."/>
            <person name="Mayer K.F.X."/>
            <person name="Hardtke C.S."/>
        </authorList>
    </citation>
    <scope>GENE FAMILY ORGANIZATION</scope>
</reference>
<reference key="4">
    <citation type="journal article" date="2006" name="J. Mol. Evol.">
        <title>The ATL gene family from Arabidopsis thaliana and Oryza sativa comprises a large number of putative ubiquitin ligases of the RING-H2 type.</title>
        <authorList>
            <person name="Serrano M."/>
            <person name="Parra S."/>
            <person name="Alcaraz L.D."/>
            <person name="Guzman P."/>
        </authorList>
    </citation>
    <scope>NOMENCLATURE</scope>
    <scope>GENE FAMILY ORGANIZATION</scope>
</reference>
<dbReference type="EC" id="2.3.2.27" evidence="5"/>
<dbReference type="EMBL" id="AB018118">
    <property type="protein sequence ID" value="BAB09593.1"/>
    <property type="molecule type" value="Genomic_DNA"/>
</dbReference>
<dbReference type="EMBL" id="CP002688">
    <property type="protein sequence ID" value="AED96946.1"/>
    <property type="molecule type" value="Genomic_DNA"/>
</dbReference>
<dbReference type="RefSeq" id="NP_200583.1">
    <property type="nucleotide sequence ID" value="NM_125158.1"/>
</dbReference>
<dbReference type="SMR" id="Q9FHG8"/>
<dbReference type="PaxDb" id="3702-AT5G57750.1"/>
<dbReference type="EnsemblPlants" id="AT5G57750.1">
    <property type="protein sequence ID" value="AT5G57750.1"/>
    <property type="gene ID" value="AT5G57750"/>
</dbReference>
<dbReference type="GeneID" id="835883"/>
<dbReference type="Gramene" id="AT5G57750.1">
    <property type="protein sequence ID" value="AT5G57750.1"/>
    <property type="gene ID" value="AT5G57750"/>
</dbReference>
<dbReference type="KEGG" id="ath:AT5G57750"/>
<dbReference type="Araport" id="AT5G57750"/>
<dbReference type="TAIR" id="AT5G57750">
    <property type="gene designation" value="ATL50"/>
</dbReference>
<dbReference type="eggNOG" id="KOG0800">
    <property type="taxonomic scope" value="Eukaryota"/>
</dbReference>
<dbReference type="HOGENOM" id="CLU_1311656_0_0_1"/>
<dbReference type="InParanoid" id="Q9FHG8"/>
<dbReference type="OMA" id="LICMISP"/>
<dbReference type="PhylomeDB" id="Q9FHG8"/>
<dbReference type="UniPathway" id="UPA00143"/>
<dbReference type="PRO" id="PR:Q9FHG8"/>
<dbReference type="Proteomes" id="UP000006548">
    <property type="component" value="Chromosome 5"/>
</dbReference>
<dbReference type="ExpressionAtlas" id="Q9FHG8">
    <property type="expression patterns" value="baseline and differential"/>
</dbReference>
<dbReference type="GO" id="GO:0016020">
    <property type="term" value="C:membrane"/>
    <property type="evidence" value="ECO:0007669"/>
    <property type="project" value="UniProtKB-SubCell"/>
</dbReference>
<dbReference type="GO" id="GO:0016740">
    <property type="term" value="F:transferase activity"/>
    <property type="evidence" value="ECO:0007669"/>
    <property type="project" value="UniProtKB-KW"/>
</dbReference>
<dbReference type="GO" id="GO:0008270">
    <property type="term" value="F:zinc ion binding"/>
    <property type="evidence" value="ECO:0007669"/>
    <property type="project" value="UniProtKB-KW"/>
</dbReference>
<dbReference type="GO" id="GO:0016567">
    <property type="term" value="P:protein ubiquitination"/>
    <property type="evidence" value="ECO:0007669"/>
    <property type="project" value="UniProtKB-UniPathway"/>
</dbReference>
<dbReference type="CDD" id="cd16461">
    <property type="entry name" value="RING-H2_EL5-like"/>
    <property type="match status" value="1"/>
</dbReference>
<dbReference type="FunFam" id="3.30.40.10:FF:000187">
    <property type="entry name" value="E3 ubiquitin-protein ligase ATL6"/>
    <property type="match status" value="1"/>
</dbReference>
<dbReference type="Gene3D" id="3.30.40.10">
    <property type="entry name" value="Zinc/RING finger domain, C3HC4 (zinc finger)"/>
    <property type="match status" value="1"/>
</dbReference>
<dbReference type="InterPro" id="IPR001841">
    <property type="entry name" value="Znf_RING"/>
</dbReference>
<dbReference type="InterPro" id="IPR013083">
    <property type="entry name" value="Znf_RING/FYVE/PHD"/>
</dbReference>
<dbReference type="PANTHER" id="PTHR45768">
    <property type="entry name" value="E3 UBIQUITIN-PROTEIN LIGASE RNF13-LIKE"/>
    <property type="match status" value="1"/>
</dbReference>
<dbReference type="PANTHER" id="PTHR45768:SF10">
    <property type="entry name" value="RING-H2 FINGER PROTEIN ATL13-RELATED"/>
    <property type="match status" value="1"/>
</dbReference>
<dbReference type="Pfam" id="PF13639">
    <property type="entry name" value="zf-RING_2"/>
    <property type="match status" value="1"/>
</dbReference>
<dbReference type="SMART" id="SM00184">
    <property type="entry name" value="RING"/>
    <property type="match status" value="1"/>
</dbReference>
<dbReference type="SUPFAM" id="SSF57850">
    <property type="entry name" value="RING/U-box"/>
    <property type="match status" value="1"/>
</dbReference>
<dbReference type="PROSITE" id="PS50089">
    <property type="entry name" value="ZF_RING_2"/>
    <property type="match status" value="1"/>
</dbReference>
<protein>
    <recommendedName>
        <fullName>Putative RING-H2 finger protein ATL50</fullName>
        <ecNumber evidence="5">2.3.2.27</ecNumber>
    </recommendedName>
    <alternativeName>
        <fullName evidence="5">RING-type E3 ubiquitin transferase ATL50</fullName>
    </alternativeName>
</protein>
<gene>
    <name type="primary">ATL50</name>
    <name type="ordered locus">At5g57750</name>
    <name type="ORF">MRI1.11</name>
</gene>
<keyword id="KW-0472">Membrane</keyword>
<keyword id="KW-0479">Metal-binding</keyword>
<keyword id="KW-1185">Reference proteome</keyword>
<keyword id="KW-0808">Transferase</keyword>
<keyword id="KW-0812">Transmembrane</keyword>
<keyword id="KW-1133">Transmembrane helix</keyword>
<keyword id="KW-0833">Ubl conjugation pathway</keyword>
<keyword id="KW-0862">Zinc</keyword>
<keyword id="KW-0863">Zinc-finger</keyword>
<name>ATL50_ARATH</name>